<evidence type="ECO:0000255" key="1">
    <source>
        <dbReference type="HAMAP-Rule" id="MF_02013"/>
    </source>
</evidence>
<gene>
    <name evidence="1" type="primary">zapA</name>
    <name type="ordered locus">BCE_4681</name>
</gene>
<dbReference type="EMBL" id="AE017194">
    <property type="protein sequence ID" value="AAS43582.1"/>
    <property type="molecule type" value="Genomic_DNA"/>
</dbReference>
<dbReference type="SMR" id="Q72ZI7"/>
<dbReference type="KEGG" id="bca:BCE_4681"/>
<dbReference type="HOGENOM" id="CLU_116623_4_0_9"/>
<dbReference type="Proteomes" id="UP000002527">
    <property type="component" value="Chromosome"/>
</dbReference>
<dbReference type="GO" id="GO:0032153">
    <property type="term" value="C:cell division site"/>
    <property type="evidence" value="ECO:0007669"/>
    <property type="project" value="TreeGrafter"/>
</dbReference>
<dbReference type="GO" id="GO:0030428">
    <property type="term" value="C:cell septum"/>
    <property type="evidence" value="ECO:0007669"/>
    <property type="project" value="TreeGrafter"/>
</dbReference>
<dbReference type="GO" id="GO:0005829">
    <property type="term" value="C:cytosol"/>
    <property type="evidence" value="ECO:0007669"/>
    <property type="project" value="TreeGrafter"/>
</dbReference>
<dbReference type="GO" id="GO:0005886">
    <property type="term" value="C:plasma membrane"/>
    <property type="evidence" value="ECO:0007669"/>
    <property type="project" value="UniProtKB-UniRule"/>
</dbReference>
<dbReference type="GO" id="GO:0000917">
    <property type="term" value="P:division septum assembly"/>
    <property type="evidence" value="ECO:0007669"/>
    <property type="project" value="UniProtKB-KW"/>
</dbReference>
<dbReference type="GO" id="GO:0043093">
    <property type="term" value="P:FtsZ-dependent cytokinesis"/>
    <property type="evidence" value="ECO:0007669"/>
    <property type="project" value="TreeGrafter"/>
</dbReference>
<dbReference type="GO" id="GO:0000921">
    <property type="term" value="P:septin ring assembly"/>
    <property type="evidence" value="ECO:0007669"/>
    <property type="project" value="TreeGrafter"/>
</dbReference>
<dbReference type="Gene3D" id="6.10.250.790">
    <property type="match status" value="1"/>
</dbReference>
<dbReference type="HAMAP" id="MF_02013">
    <property type="entry name" value="ZapA_type2"/>
    <property type="match status" value="1"/>
</dbReference>
<dbReference type="InterPro" id="IPR053712">
    <property type="entry name" value="Bac_CellDiv_Activator"/>
</dbReference>
<dbReference type="InterPro" id="IPR007838">
    <property type="entry name" value="Cell_div_ZapA-like"/>
</dbReference>
<dbReference type="InterPro" id="IPR036192">
    <property type="entry name" value="Cell_div_ZapA-like_sf"/>
</dbReference>
<dbReference type="InterPro" id="IPR023688">
    <property type="entry name" value="Cell_div_ZapA_firmicutes"/>
</dbReference>
<dbReference type="NCBIfam" id="NF010724">
    <property type="entry name" value="PRK14126.1"/>
    <property type="match status" value="1"/>
</dbReference>
<dbReference type="PANTHER" id="PTHR34981">
    <property type="entry name" value="CELL DIVISION PROTEIN ZAPA"/>
    <property type="match status" value="1"/>
</dbReference>
<dbReference type="PANTHER" id="PTHR34981:SF1">
    <property type="entry name" value="CELL DIVISION PROTEIN ZAPA"/>
    <property type="match status" value="1"/>
</dbReference>
<dbReference type="Pfam" id="PF05164">
    <property type="entry name" value="ZapA"/>
    <property type="match status" value="1"/>
</dbReference>
<dbReference type="SUPFAM" id="SSF102829">
    <property type="entry name" value="Cell division protein ZapA-like"/>
    <property type="match status" value="1"/>
</dbReference>
<comment type="function">
    <text evidence="1">Activator of cell division through the inhibition of FtsZ GTPase activity, therefore promoting FtsZ assembly into bundles of protofilaments necessary for the formation of the division Z ring. It is recruited early at mid-cell but it is not essential for cell division.</text>
</comment>
<comment type="subunit">
    <text evidence="1">Homodimer. Interacts with FtsZ.</text>
</comment>
<comment type="subcellular location">
    <subcellularLocation>
        <location evidence="1">Cytoplasm</location>
    </subcellularLocation>
    <text evidence="1">Localizes at mid-cell. In sporulating cells, localizes near the cell poles.</text>
</comment>
<comment type="similarity">
    <text evidence="1">Belongs to the ZapA family. Type 2 subfamily.</text>
</comment>
<sequence>MSQQKGKKSRINVEIYGQQYSVVGDESTSHIRMVAAIVDDKMRELNAKNPSLDTSRLAVLTAVNVIHDYIKLKEEHEKLKESMTKKGME</sequence>
<reference key="1">
    <citation type="journal article" date="2004" name="Nucleic Acids Res.">
        <title>The genome sequence of Bacillus cereus ATCC 10987 reveals metabolic adaptations and a large plasmid related to Bacillus anthracis pXO1.</title>
        <authorList>
            <person name="Rasko D.A."/>
            <person name="Ravel J."/>
            <person name="Oekstad O.A."/>
            <person name="Helgason E."/>
            <person name="Cer R.Z."/>
            <person name="Jiang L."/>
            <person name="Shores K.A."/>
            <person name="Fouts D.E."/>
            <person name="Tourasse N.J."/>
            <person name="Angiuoli S.V."/>
            <person name="Kolonay J.F."/>
            <person name="Nelson W.C."/>
            <person name="Kolstoe A.-B."/>
            <person name="Fraser C.M."/>
            <person name="Read T.D."/>
        </authorList>
    </citation>
    <scope>NUCLEOTIDE SEQUENCE [LARGE SCALE GENOMIC DNA]</scope>
    <source>
        <strain>ATCC 10987 / NRS 248</strain>
    </source>
</reference>
<organism>
    <name type="scientific">Bacillus cereus (strain ATCC 10987 / NRS 248)</name>
    <dbReference type="NCBI Taxonomy" id="222523"/>
    <lineage>
        <taxon>Bacteria</taxon>
        <taxon>Bacillati</taxon>
        <taxon>Bacillota</taxon>
        <taxon>Bacilli</taxon>
        <taxon>Bacillales</taxon>
        <taxon>Bacillaceae</taxon>
        <taxon>Bacillus</taxon>
        <taxon>Bacillus cereus group</taxon>
    </lineage>
</organism>
<keyword id="KW-0131">Cell cycle</keyword>
<keyword id="KW-0132">Cell division</keyword>
<keyword id="KW-0963">Cytoplasm</keyword>
<keyword id="KW-0717">Septation</keyword>
<feature type="chain" id="PRO_0000345678" description="Cell division protein ZapA">
    <location>
        <begin position="1"/>
        <end position="89"/>
    </location>
</feature>
<proteinExistence type="inferred from homology"/>
<accession>Q72ZI7</accession>
<protein>
    <recommendedName>
        <fullName evidence="1">Cell division protein ZapA</fullName>
    </recommendedName>
    <alternativeName>
        <fullName evidence="1">Z ring-associated protein ZapA</fullName>
    </alternativeName>
</protein>
<name>ZAPA_BACC1</name>